<reference key="1">
    <citation type="journal article" date="1999" name="EMBO J.">
        <title>Mre11 is essential for the maintenance of chromosomal DNA in vertebrate cells.</title>
        <authorList>
            <person name="Yamaguchi-Iwai Y."/>
            <person name="Sonoda E."/>
            <person name="Sasaki M.S."/>
            <person name="Morrison C."/>
            <person name="Haraguchi T."/>
            <person name="Hiraoka Y."/>
            <person name="Yamashita Y.M."/>
            <person name="Yagi T."/>
            <person name="Takata M."/>
            <person name="Price C."/>
            <person name="Kakazu N."/>
            <person name="Takeda S."/>
        </authorList>
    </citation>
    <scope>NUCLEOTIDE SEQUENCE [MRNA]</scope>
    <source>
        <tissue>Testis</tissue>
    </source>
</reference>
<dbReference type="EC" id="3.1.-.-" evidence="1"/>
<dbReference type="EMBL" id="AF166094">
    <property type="protein sequence ID" value="AAF31354.1"/>
    <property type="molecule type" value="mRNA"/>
</dbReference>
<dbReference type="RefSeq" id="NP_990109.1">
    <property type="nucleotide sequence ID" value="NM_204778.1"/>
</dbReference>
<dbReference type="SMR" id="Q9IAM7"/>
<dbReference type="FunCoup" id="Q9IAM7">
    <property type="interactions" value="2148"/>
</dbReference>
<dbReference type="STRING" id="9031.ENSGALP00000027766"/>
<dbReference type="PaxDb" id="9031-ENSGALP00000027766"/>
<dbReference type="GeneID" id="395555"/>
<dbReference type="KEGG" id="gga:395555"/>
<dbReference type="CTD" id="4361"/>
<dbReference type="VEuPathDB" id="HostDB:geneid_395555"/>
<dbReference type="eggNOG" id="KOG2310">
    <property type="taxonomic scope" value="Eukaryota"/>
</dbReference>
<dbReference type="InParanoid" id="Q9IAM7"/>
<dbReference type="OrthoDB" id="30417at2759"/>
<dbReference type="PhylomeDB" id="Q9IAM7"/>
<dbReference type="Reactome" id="R-GGA-217106">
    <property type="pathway name" value="Chk1-controlled and DNA-damage induced centrosome duplication"/>
</dbReference>
<dbReference type="Reactome" id="R-GGA-351442">
    <property type="pathway name" value="ATM mediated response to DNA double-strand break"/>
</dbReference>
<dbReference type="Reactome" id="R-GGA-351444">
    <property type="pathway name" value="Recruitment of repair and signaling proteins to double-strand breaks"/>
</dbReference>
<dbReference type="PRO" id="PR:Q9IAM7"/>
<dbReference type="Proteomes" id="UP000000539">
    <property type="component" value="Unassembled WGS sequence"/>
</dbReference>
<dbReference type="GO" id="GO:0000781">
    <property type="term" value="C:chromosome, telomeric region"/>
    <property type="evidence" value="ECO:0007669"/>
    <property type="project" value="UniProtKB-SubCell"/>
</dbReference>
<dbReference type="GO" id="GO:0030870">
    <property type="term" value="C:Mre11 complex"/>
    <property type="evidence" value="ECO:0000250"/>
    <property type="project" value="UniProtKB"/>
</dbReference>
<dbReference type="GO" id="GO:0005654">
    <property type="term" value="C:nucleoplasm"/>
    <property type="evidence" value="ECO:0000304"/>
    <property type="project" value="Reactome"/>
</dbReference>
<dbReference type="GO" id="GO:0005657">
    <property type="term" value="C:replication fork"/>
    <property type="evidence" value="ECO:0000250"/>
    <property type="project" value="UniProtKB"/>
</dbReference>
<dbReference type="GO" id="GO:0035861">
    <property type="term" value="C:site of double-strand break"/>
    <property type="evidence" value="ECO:0000250"/>
    <property type="project" value="UniProtKB"/>
</dbReference>
<dbReference type="GO" id="GO:0008408">
    <property type="term" value="F:3'-5' exonuclease activity"/>
    <property type="evidence" value="ECO:0000250"/>
    <property type="project" value="UniProtKB"/>
</dbReference>
<dbReference type="GO" id="GO:0008296">
    <property type="term" value="F:3'-5'-DNA exonuclease activity"/>
    <property type="evidence" value="ECO:0007669"/>
    <property type="project" value="InterPro"/>
</dbReference>
<dbReference type="GO" id="GO:0004520">
    <property type="term" value="F:DNA endonuclease activity"/>
    <property type="evidence" value="ECO:0000250"/>
    <property type="project" value="UniProtKB"/>
</dbReference>
<dbReference type="GO" id="GO:0030145">
    <property type="term" value="F:manganese ion binding"/>
    <property type="evidence" value="ECO:0007669"/>
    <property type="project" value="InterPro"/>
</dbReference>
<dbReference type="GO" id="GO:0000014">
    <property type="term" value="F:single-stranded DNA endodeoxyribonuclease activity"/>
    <property type="evidence" value="ECO:0000318"/>
    <property type="project" value="GO_Central"/>
</dbReference>
<dbReference type="GO" id="GO:0006974">
    <property type="term" value="P:DNA damage response"/>
    <property type="evidence" value="ECO:0000250"/>
    <property type="project" value="UniProtKB"/>
</dbReference>
<dbReference type="GO" id="GO:0110025">
    <property type="term" value="P:DNA strand resection involved in replication fork processing"/>
    <property type="evidence" value="ECO:0000250"/>
    <property type="project" value="UniProtKB"/>
</dbReference>
<dbReference type="GO" id="GO:0000724">
    <property type="term" value="P:double-strand break repair via homologous recombination"/>
    <property type="evidence" value="ECO:0000250"/>
    <property type="project" value="UniProtKB"/>
</dbReference>
<dbReference type="GO" id="GO:0006303">
    <property type="term" value="P:double-strand break repair via nonhomologous end joining"/>
    <property type="evidence" value="ECO:0000250"/>
    <property type="project" value="UniProtKB"/>
</dbReference>
<dbReference type="GO" id="GO:0042138">
    <property type="term" value="P:meiotic DNA double-strand break formation"/>
    <property type="evidence" value="ECO:0000318"/>
    <property type="project" value="GO_Central"/>
</dbReference>
<dbReference type="GO" id="GO:0097552">
    <property type="term" value="P:mitochondrial double-strand break repair via homologous recombination"/>
    <property type="evidence" value="ECO:0000318"/>
    <property type="project" value="GO_Central"/>
</dbReference>
<dbReference type="GO" id="GO:0007095">
    <property type="term" value="P:mitotic G2 DNA damage checkpoint signaling"/>
    <property type="evidence" value="ECO:0000318"/>
    <property type="project" value="GO_Central"/>
</dbReference>
<dbReference type="GO" id="GO:0031573">
    <property type="term" value="P:mitotic intra-S DNA damage checkpoint signaling"/>
    <property type="evidence" value="ECO:0000318"/>
    <property type="project" value="GO_Central"/>
</dbReference>
<dbReference type="GO" id="GO:2001033">
    <property type="term" value="P:negative regulation of double-strand break repair via nonhomologous end joining"/>
    <property type="evidence" value="ECO:0000250"/>
    <property type="project" value="UniProtKB"/>
</dbReference>
<dbReference type="GO" id="GO:0062176">
    <property type="term" value="P:R-loop processing"/>
    <property type="evidence" value="ECO:0000250"/>
    <property type="project" value="UniProtKB"/>
</dbReference>
<dbReference type="GO" id="GO:0000723">
    <property type="term" value="P:telomere maintenance"/>
    <property type="evidence" value="ECO:0000318"/>
    <property type="project" value="GO_Central"/>
</dbReference>
<dbReference type="CDD" id="cd00840">
    <property type="entry name" value="MPP_Mre11_N"/>
    <property type="match status" value="1"/>
</dbReference>
<dbReference type="FunFam" id="3.30.110.110:FF:000001">
    <property type="entry name" value="Double-strand break repair protein"/>
    <property type="match status" value="1"/>
</dbReference>
<dbReference type="FunFam" id="3.60.21.10:FF:000011">
    <property type="entry name" value="Double-strand break repair protein"/>
    <property type="match status" value="1"/>
</dbReference>
<dbReference type="Gene3D" id="3.60.21.10">
    <property type="match status" value="1"/>
</dbReference>
<dbReference type="Gene3D" id="3.30.110.110">
    <property type="entry name" value="Mre11, capping domain"/>
    <property type="match status" value="1"/>
</dbReference>
<dbReference type="InterPro" id="IPR004843">
    <property type="entry name" value="Calcineurin-like_PHP_ApaH"/>
</dbReference>
<dbReference type="InterPro" id="IPR029052">
    <property type="entry name" value="Metallo-depent_PP-like"/>
</dbReference>
<dbReference type="InterPro" id="IPR003701">
    <property type="entry name" value="Mre11"/>
</dbReference>
<dbReference type="InterPro" id="IPR038487">
    <property type="entry name" value="Mre11_capping_dom"/>
</dbReference>
<dbReference type="InterPro" id="IPR007281">
    <property type="entry name" value="Mre11_DNA-bd"/>
</dbReference>
<dbReference type="InterPro" id="IPR041796">
    <property type="entry name" value="Mre11_N"/>
</dbReference>
<dbReference type="NCBIfam" id="TIGR00583">
    <property type="entry name" value="mre11"/>
    <property type="match status" value="1"/>
</dbReference>
<dbReference type="PANTHER" id="PTHR10139">
    <property type="entry name" value="DOUBLE-STRAND BREAK REPAIR PROTEIN MRE11"/>
    <property type="match status" value="1"/>
</dbReference>
<dbReference type="PANTHER" id="PTHR10139:SF1">
    <property type="entry name" value="DOUBLE-STRAND BREAK REPAIR PROTEIN MRE11"/>
    <property type="match status" value="1"/>
</dbReference>
<dbReference type="Pfam" id="PF00149">
    <property type="entry name" value="Metallophos"/>
    <property type="match status" value="1"/>
</dbReference>
<dbReference type="Pfam" id="PF04152">
    <property type="entry name" value="Mre11_DNA_bind"/>
    <property type="match status" value="1"/>
</dbReference>
<dbReference type="PIRSF" id="PIRSF000882">
    <property type="entry name" value="DSB_repair_MRE11"/>
    <property type="match status" value="1"/>
</dbReference>
<dbReference type="SMART" id="SM01347">
    <property type="entry name" value="Mre11_DNA_bind"/>
    <property type="match status" value="1"/>
</dbReference>
<dbReference type="SUPFAM" id="SSF56300">
    <property type="entry name" value="Metallo-dependent phosphatases"/>
    <property type="match status" value="1"/>
</dbReference>
<comment type="function">
    <text evidence="1">Core component of the MRN complex, which plays a central role in double-strand break (DSB) repair, DNA recombination, maintenance of telomere integrity and meiosis (By similarity). The MRN complex is involved in the repair of DNA double-strand breaks (DSBs) via homologous recombination (HR), an error-free mechanism which primarily occurs during S and G2 phases (By similarity). The complex (1) mediates the end resection of damaged DNA, which generates proper single-stranded DNA, a key initial steps in HR, and is (2) required for the recruitment of other repair factors and efficient activation of ATM and ATR upon DNA damage (By similarity). Within the MRN complex, MRE11 possesses both single-strand endonuclease activity and double-strand-specific 3'-5' exonuclease activity (By similarity). After DSBs, MRE11 is loaded onto DSBs sites and cleaves DNA by cooperating with RBBP8/CtIP to initiate end resection (By similarity). MRE11 first endonucleolytically cleaves the 5' strand at DNA DSB ends to prevent non-homologous end joining (NHEJ) and licence HR (By similarity). It then generates a single-stranded DNA gap via 3' to 5' exonucleolytic degradation to create entry sites for EXO1- and DNA2-mediated 5' to 3' long-range resection, which is required for single-strand invasion and recombination (By similarity). RBBP8/CtIP specifically promotes the endonuclease activity of MRE11 to clear protein-DNA adducts and generate clean double-strand break ends (By similarity). The MRN complex is also required for DNA damage signaling via activation of the ATM and ATR kinases: the nuclease activity of MRE11 is not required to activate ATM and ATR (By similarity). In telomeres the MRN complex may modulate t-loop formation (By similarity).</text>
</comment>
<comment type="cofactor">
    <cofactor evidence="1">
        <name>Mn(2+)</name>
        <dbReference type="ChEBI" id="CHEBI:29035"/>
    </cofactor>
</comment>
<comment type="subunit">
    <text evidence="3">Component of the MRN complex composed of two heterodimers RAD50 and MRE11 associated with a single NBN.</text>
</comment>
<comment type="subcellular location">
    <subcellularLocation>
        <location evidence="1">Nucleus</location>
    </subcellularLocation>
    <subcellularLocation>
        <location evidence="1">Chromosome</location>
    </subcellularLocation>
    <subcellularLocation>
        <location evidence="1">Chromosome</location>
        <location evidence="1">Telomere</location>
    </subcellularLocation>
    <text evidence="1">Localizes to DNA double-strand breaks (DSBs).</text>
</comment>
<comment type="similarity">
    <text evidence="5">Belongs to the MRE11/RAD32 family.</text>
</comment>
<accession>Q9IAM7</accession>
<sequence>MSAVSLQDDEDTFKILIATDIHLGYLEKDAVRGNDTFVTFNEILEHAQKNEVDFILLGGDLFHENKPSRKTIHTCLESLRKYCMGDRPVSFEVLSDQAVNFQLSKFPWVNYQDENLNIFMPIFSIHGNHDDPTGVDALCALDILSCAGLLNHFGRSTSVEKIDISPILLRKGRTKIALYGLGAIPDERLYRMFVNKQVTMLRPKEDEDSWFNMFVIHQNRSKHGATNYIPEQFLDDFINLAVWGHEHECKITPAQNEQQHFYVTQPGSSVVTSLSPGEAVKKHIGLLRVKGKKMKMQRIALETVRTFYMEDVVLADHPELFNPDNPKVTQAIQAFCMEKVEMMLDNAERERLGNPRQPQKPLIILRVDYTGGFEPFIVHRFSQKYMDRVANPKDIIHFFRHREQKEKNDNDINFGKLLSRPASEEVTLRVEDLVKQYFQTAEKKVQLSLLTERRMGEAVQEFVDKEEKDAIEELVKFQLEKTQRFLKERHIDAEEEKIDEEVRKFRESRRKNTEEEDEEVREAMTRARAHRSEGVVLDSASSDEGLMDTGMKASGDSDDDIPTTLSRGRGRGRARGARGQNSAARGSSRRGRGNTSQGSSTSSRTYKSVPDKNSSIMDAFRSLKPEPSQSTSKFFSEDIIDDEMDLEESPISLSSKTNQRSSAMSSFSKRGSQSQMSRGVDFESDEDDPFKNTATSRRKK</sequence>
<evidence type="ECO:0000250" key="1">
    <source>
        <dbReference type="UniProtKB" id="P49959"/>
    </source>
</evidence>
<evidence type="ECO:0000250" key="2">
    <source>
        <dbReference type="UniProtKB" id="Q61216"/>
    </source>
</evidence>
<evidence type="ECO:0000250" key="3">
    <source>
        <dbReference type="UniProtKB" id="Q9W6K1"/>
    </source>
</evidence>
<evidence type="ECO:0000256" key="4">
    <source>
        <dbReference type="SAM" id="MobiDB-lite"/>
    </source>
</evidence>
<evidence type="ECO:0000305" key="5"/>
<organism>
    <name type="scientific">Gallus gallus</name>
    <name type="common">Chicken</name>
    <dbReference type="NCBI Taxonomy" id="9031"/>
    <lineage>
        <taxon>Eukaryota</taxon>
        <taxon>Metazoa</taxon>
        <taxon>Chordata</taxon>
        <taxon>Craniata</taxon>
        <taxon>Vertebrata</taxon>
        <taxon>Euteleostomi</taxon>
        <taxon>Archelosauria</taxon>
        <taxon>Archosauria</taxon>
        <taxon>Dinosauria</taxon>
        <taxon>Saurischia</taxon>
        <taxon>Theropoda</taxon>
        <taxon>Coelurosauria</taxon>
        <taxon>Aves</taxon>
        <taxon>Neognathae</taxon>
        <taxon>Galloanserae</taxon>
        <taxon>Galliformes</taxon>
        <taxon>Phasianidae</taxon>
        <taxon>Phasianinae</taxon>
        <taxon>Gallus</taxon>
    </lineage>
</organism>
<keyword id="KW-0158">Chromosome</keyword>
<keyword id="KW-0227">DNA damage</keyword>
<keyword id="KW-0234">DNA repair</keyword>
<keyword id="KW-0255">Endonuclease</keyword>
<keyword id="KW-0269">Exonuclease</keyword>
<keyword id="KW-0378">Hydrolase</keyword>
<keyword id="KW-0464">Manganese</keyword>
<keyword id="KW-0469">Meiosis</keyword>
<keyword id="KW-0479">Metal-binding</keyword>
<keyword id="KW-0540">Nuclease</keyword>
<keyword id="KW-0539">Nucleus</keyword>
<keyword id="KW-1185">Reference proteome</keyword>
<keyword id="KW-0779">Telomere</keyword>
<protein>
    <recommendedName>
        <fullName>Double-strand break repair protein MRE11</fullName>
        <ecNumber evidence="1">3.1.-.-</ecNumber>
    </recommendedName>
</protein>
<name>MRE11_CHICK</name>
<feature type="chain" id="PRO_0000138676" description="Double-strand break repair protein MRE11">
    <location>
        <begin position="1"/>
        <end position="700"/>
    </location>
</feature>
<feature type="region of interest" description="Disordered" evidence="4">
    <location>
        <begin position="505"/>
        <end position="700"/>
    </location>
</feature>
<feature type="short sequence motif" description="GAR" evidence="1">
    <location>
        <begin position="569"/>
        <end position="592"/>
    </location>
</feature>
<feature type="compositionally biased region" description="Basic and acidic residues" evidence="4">
    <location>
        <begin position="521"/>
        <end position="533"/>
    </location>
</feature>
<feature type="compositionally biased region" description="Low complexity" evidence="4">
    <location>
        <begin position="577"/>
        <end position="586"/>
    </location>
</feature>
<feature type="compositionally biased region" description="Low complexity" evidence="4">
    <location>
        <begin position="593"/>
        <end position="604"/>
    </location>
</feature>
<feature type="compositionally biased region" description="Acidic residues" evidence="4">
    <location>
        <begin position="638"/>
        <end position="648"/>
    </location>
</feature>
<feature type="compositionally biased region" description="Polar residues" evidence="4">
    <location>
        <begin position="651"/>
        <end position="677"/>
    </location>
</feature>
<feature type="active site" description="Proton donor" evidence="2">
    <location>
        <position position="129"/>
    </location>
</feature>
<feature type="binding site" evidence="1">
    <location>
        <position position="20"/>
    </location>
    <ligand>
        <name>Mn(2+)</name>
        <dbReference type="ChEBI" id="CHEBI:29035"/>
        <label>1</label>
    </ligand>
</feature>
<feature type="binding site" evidence="1">
    <location>
        <position position="22"/>
    </location>
    <ligand>
        <name>Mn(2+)</name>
        <dbReference type="ChEBI" id="CHEBI:29035"/>
        <label>1</label>
    </ligand>
</feature>
<feature type="binding site" evidence="1">
    <location>
        <position position="60"/>
    </location>
    <ligand>
        <name>Mn(2+)</name>
        <dbReference type="ChEBI" id="CHEBI:29035"/>
        <label>1</label>
    </ligand>
</feature>
<feature type="binding site" evidence="1">
    <location>
        <position position="60"/>
    </location>
    <ligand>
        <name>Mn(2+)</name>
        <dbReference type="ChEBI" id="CHEBI:29035"/>
        <label>2</label>
    </ligand>
</feature>
<feature type="binding site" evidence="1">
    <location>
        <position position="128"/>
    </location>
    <ligand>
        <name>Mn(2+)</name>
        <dbReference type="ChEBI" id="CHEBI:29035"/>
        <label>2</label>
    </ligand>
</feature>
<feature type="binding site" evidence="1">
    <location>
        <position position="217"/>
    </location>
    <ligand>
        <name>Mn(2+)</name>
        <dbReference type="ChEBI" id="CHEBI:29035"/>
        <label>2</label>
    </ligand>
</feature>
<feature type="binding site" evidence="1">
    <location>
        <position position="245"/>
    </location>
    <ligand>
        <name>Mn(2+)</name>
        <dbReference type="ChEBI" id="CHEBI:29035"/>
        <label>2</label>
    </ligand>
</feature>
<feature type="binding site" evidence="1">
    <location>
        <position position="247"/>
    </location>
    <ligand>
        <name>Mn(2+)</name>
        <dbReference type="ChEBI" id="CHEBI:29035"/>
        <label>1</label>
    </ligand>
</feature>
<gene>
    <name type="primary">MRE11</name>
</gene>
<proteinExistence type="evidence at transcript level"/>